<name>RL333_STAEQ</name>
<feature type="chain" id="PRO_0000170234" description="Large ribosomal subunit protein bL33C">
    <location>
        <begin position="1"/>
        <end position="47"/>
    </location>
</feature>
<comment type="similarity">
    <text evidence="1">Belongs to the bacterial ribosomal protein bL33 family.</text>
</comment>
<proteinExistence type="inferred from homology"/>
<keyword id="KW-1185">Reference proteome</keyword>
<keyword id="KW-0687">Ribonucleoprotein</keyword>
<keyword id="KW-0689">Ribosomal protein</keyword>
<reference key="1">
    <citation type="journal article" date="2005" name="J. Bacteriol.">
        <title>Insights on evolution of virulence and resistance from the complete genome analysis of an early methicillin-resistant Staphylococcus aureus strain and a biofilm-producing methicillin-resistant Staphylococcus epidermidis strain.</title>
        <authorList>
            <person name="Gill S.R."/>
            <person name="Fouts D.E."/>
            <person name="Archer G.L."/>
            <person name="Mongodin E.F."/>
            <person name="DeBoy R.T."/>
            <person name="Ravel J."/>
            <person name="Paulsen I.T."/>
            <person name="Kolonay J.F."/>
            <person name="Brinkac L.M."/>
            <person name="Beanan M.J."/>
            <person name="Dodson R.J."/>
            <person name="Daugherty S.C."/>
            <person name="Madupu R."/>
            <person name="Angiuoli S.V."/>
            <person name="Durkin A.S."/>
            <person name="Haft D.H."/>
            <person name="Vamathevan J.J."/>
            <person name="Khouri H."/>
            <person name="Utterback T.R."/>
            <person name="Lee C."/>
            <person name="Dimitrov G."/>
            <person name="Jiang L."/>
            <person name="Qin H."/>
            <person name="Weidman J."/>
            <person name="Tran K."/>
            <person name="Kang K.H."/>
            <person name="Hance I.R."/>
            <person name="Nelson K.E."/>
            <person name="Fraser C.M."/>
        </authorList>
    </citation>
    <scope>NUCLEOTIDE SEQUENCE [LARGE SCALE GENOMIC DNA]</scope>
    <source>
        <strain>ATCC 35984 / DSM 28319 / BCRC 17069 / CCUG 31568 / BM 3577 / RP62A</strain>
    </source>
</reference>
<sequence>MKKVPLNCENCGNRNYNVPKKEGSATRLTLKKYCPRCNAHTVHKESK</sequence>
<gene>
    <name evidence="1" type="primary">rpmG3</name>
    <name type="ordered locus">SERP0175</name>
</gene>
<dbReference type="EMBL" id="CP000029">
    <property type="protein sequence ID" value="AAW55288.1"/>
    <property type="molecule type" value="Genomic_DNA"/>
</dbReference>
<dbReference type="SMR" id="Q5HRL8"/>
<dbReference type="STRING" id="176279.SERP0175"/>
<dbReference type="KEGG" id="ser:SERP0175"/>
<dbReference type="eggNOG" id="COG0267">
    <property type="taxonomic scope" value="Bacteria"/>
</dbReference>
<dbReference type="HOGENOM" id="CLU_190949_0_1_9"/>
<dbReference type="Proteomes" id="UP000000531">
    <property type="component" value="Chromosome"/>
</dbReference>
<dbReference type="GO" id="GO:0005737">
    <property type="term" value="C:cytoplasm"/>
    <property type="evidence" value="ECO:0007669"/>
    <property type="project" value="UniProtKB-ARBA"/>
</dbReference>
<dbReference type="GO" id="GO:1990904">
    <property type="term" value="C:ribonucleoprotein complex"/>
    <property type="evidence" value="ECO:0007669"/>
    <property type="project" value="UniProtKB-KW"/>
</dbReference>
<dbReference type="GO" id="GO:0005840">
    <property type="term" value="C:ribosome"/>
    <property type="evidence" value="ECO:0007669"/>
    <property type="project" value="UniProtKB-KW"/>
</dbReference>
<dbReference type="GO" id="GO:0003735">
    <property type="term" value="F:structural constituent of ribosome"/>
    <property type="evidence" value="ECO:0007669"/>
    <property type="project" value="InterPro"/>
</dbReference>
<dbReference type="GO" id="GO:0006412">
    <property type="term" value="P:translation"/>
    <property type="evidence" value="ECO:0007669"/>
    <property type="project" value="UniProtKB-UniRule"/>
</dbReference>
<dbReference type="Gene3D" id="2.20.28.120">
    <property type="entry name" value="Ribosomal protein L33"/>
    <property type="match status" value="1"/>
</dbReference>
<dbReference type="HAMAP" id="MF_00294">
    <property type="entry name" value="Ribosomal_bL33"/>
    <property type="match status" value="1"/>
</dbReference>
<dbReference type="InterPro" id="IPR001705">
    <property type="entry name" value="Ribosomal_bL33"/>
</dbReference>
<dbReference type="InterPro" id="IPR018264">
    <property type="entry name" value="Ribosomal_bL33_CS"/>
</dbReference>
<dbReference type="InterPro" id="IPR038584">
    <property type="entry name" value="Ribosomal_bL33_sf"/>
</dbReference>
<dbReference type="InterPro" id="IPR011332">
    <property type="entry name" value="Ribosomal_zn-bd"/>
</dbReference>
<dbReference type="NCBIfam" id="NF001764">
    <property type="entry name" value="PRK00504.1"/>
    <property type="match status" value="1"/>
</dbReference>
<dbReference type="NCBIfam" id="TIGR01023">
    <property type="entry name" value="rpmG_bact"/>
    <property type="match status" value="1"/>
</dbReference>
<dbReference type="Pfam" id="PF00471">
    <property type="entry name" value="Ribosomal_L33"/>
    <property type="match status" value="1"/>
</dbReference>
<dbReference type="SUPFAM" id="SSF57829">
    <property type="entry name" value="Zn-binding ribosomal proteins"/>
    <property type="match status" value="1"/>
</dbReference>
<dbReference type="PROSITE" id="PS00582">
    <property type="entry name" value="RIBOSOMAL_L33"/>
    <property type="match status" value="1"/>
</dbReference>
<protein>
    <recommendedName>
        <fullName evidence="1">Large ribosomal subunit protein bL33C</fullName>
    </recommendedName>
    <alternativeName>
        <fullName evidence="1">50S ribosomal protein L33 3</fullName>
    </alternativeName>
</protein>
<evidence type="ECO:0000255" key="1">
    <source>
        <dbReference type="HAMAP-Rule" id="MF_00294"/>
    </source>
</evidence>
<accession>Q5HRL8</accession>
<organism>
    <name type="scientific">Staphylococcus epidermidis (strain ATCC 35984 / DSM 28319 / BCRC 17069 / CCUG 31568 / BM 3577 / RP62A)</name>
    <dbReference type="NCBI Taxonomy" id="176279"/>
    <lineage>
        <taxon>Bacteria</taxon>
        <taxon>Bacillati</taxon>
        <taxon>Bacillota</taxon>
        <taxon>Bacilli</taxon>
        <taxon>Bacillales</taxon>
        <taxon>Staphylococcaceae</taxon>
        <taxon>Staphylococcus</taxon>
    </lineage>
</organism>